<feature type="chain" id="PRO_1000198184" description="Trigger factor">
    <location>
        <begin position="1"/>
        <end position="490"/>
    </location>
</feature>
<feature type="domain" description="PPIase FKBP-type" evidence="1">
    <location>
        <begin position="161"/>
        <end position="247"/>
    </location>
</feature>
<feature type="region of interest" description="Disordered" evidence="2">
    <location>
        <begin position="441"/>
        <end position="490"/>
    </location>
</feature>
<feature type="compositionally biased region" description="Low complexity" evidence="2">
    <location>
        <begin position="441"/>
        <end position="460"/>
    </location>
</feature>
<feature type="compositionally biased region" description="Polar residues" evidence="2">
    <location>
        <begin position="466"/>
        <end position="481"/>
    </location>
</feature>
<accession>B9L1E4</accession>
<reference key="1">
    <citation type="journal article" date="2009" name="PLoS ONE">
        <title>Complete genome sequence of the aerobic CO-oxidizing thermophile Thermomicrobium roseum.</title>
        <authorList>
            <person name="Wu D."/>
            <person name="Raymond J."/>
            <person name="Wu M."/>
            <person name="Chatterji S."/>
            <person name="Ren Q."/>
            <person name="Graham J.E."/>
            <person name="Bryant D.A."/>
            <person name="Robb F."/>
            <person name="Colman A."/>
            <person name="Tallon L.J."/>
            <person name="Badger J.H."/>
            <person name="Madupu R."/>
            <person name="Ward N.L."/>
            <person name="Eisen J.A."/>
        </authorList>
    </citation>
    <scope>NUCLEOTIDE SEQUENCE [LARGE SCALE GENOMIC DNA]</scope>
    <source>
        <strain>ATCC 27502 / DSM 5159 / P-2</strain>
    </source>
</reference>
<evidence type="ECO:0000255" key="1">
    <source>
        <dbReference type="HAMAP-Rule" id="MF_00303"/>
    </source>
</evidence>
<evidence type="ECO:0000256" key="2">
    <source>
        <dbReference type="SAM" id="MobiDB-lite"/>
    </source>
</evidence>
<dbReference type="EC" id="5.2.1.8" evidence="1"/>
<dbReference type="EMBL" id="CP001275">
    <property type="protein sequence ID" value="ACM05201.1"/>
    <property type="molecule type" value="Genomic_DNA"/>
</dbReference>
<dbReference type="RefSeq" id="WP_015922155.1">
    <property type="nucleotide sequence ID" value="NC_011959.1"/>
</dbReference>
<dbReference type="SMR" id="B9L1E4"/>
<dbReference type="STRING" id="309801.trd_1203"/>
<dbReference type="KEGG" id="tro:trd_1203"/>
<dbReference type="eggNOG" id="COG0544">
    <property type="taxonomic scope" value="Bacteria"/>
</dbReference>
<dbReference type="HOGENOM" id="CLU_033058_3_1_0"/>
<dbReference type="OrthoDB" id="9767721at2"/>
<dbReference type="Proteomes" id="UP000000447">
    <property type="component" value="Chromosome"/>
</dbReference>
<dbReference type="GO" id="GO:0005737">
    <property type="term" value="C:cytoplasm"/>
    <property type="evidence" value="ECO:0007669"/>
    <property type="project" value="UniProtKB-SubCell"/>
</dbReference>
<dbReference type="GO" id="GO:0003755">
    <property type="term" value="F:peptidyl-prolyl cis-trans isomerase activity"/>
    <property type="evidence" value="ECO:0007669"/>
    <property type="project" value="UniProtKB-UniRule"/>
</dbReference>
<dbReference type="GO" id="GO:0044183">
    <property type="term" value="F:protein folding chaperone"/>
    <property type="evidence" value="ECO:0007669"/>
    <property type="project" value="TreeGrafter"/>
</dbReference>
<dbReference type="GO" id="GO:0043022">
    <property type="term" value="F:ribosome binding"/>
    <property type="evidence" value="ECO:0007669"/>
    <property type="project" value="TreeGrafter"/>
</dbReference>
<dbReference type="GO" id="GO:0051083">
    <property type="term" value="P:'de novo' cotranslational protein folding"/>
    <property type="evidence" value="ECO:0007669"/>
    <property type="project" value="TreeGrafter"/>
</dbReference>
<dbReference type="GO" id="GO:0051301">
    <property type="term" value="P:cell division"/>
    <property type="evidence" value="ECO:0007669"/>
    <property type="project" value="UniProtKB-KW"/>
</dbReference>
<dbReference type="GO" id="GO:0061077">
    <property type="term" value="P:chaperone-mediated protein folding"/>
    <property type="evidence" value="ECO:0007669"/>
    <property type="project" value="TreeGrafter"/>
</dbReference>
<dbReference type="GO" id="GO:0015031">
    <property type="term" value="P:protein transport"/>
    <property type="evidence" value="ECO:0007669"/>
    <property type="project" value="UniProtKB-UniRule"/>
</dbReference>
<dbReference type="GO" id="GO:0043335">
    <property type="term" value="P:protein unfolding"/>
    <property type="evidence" value="ECO:0007669"/>
    <property type="project" value="TreeGrafter"/>
</dbReference>
<dbReference type="Gene3D" id="3.10.50.40">
    <property type="match status" value="1"/>
</dbReference>
<dbReference type="Gene3D" id="3.30.70.1050">
    <property type="entry name" value="Trigger factor ribosome-binding domain"/>
    <property type="match status" value="1"/>
</dbReference>
<dbReference type="Gene3D" id="1.10.3120.10">
    <property type="entry name" value="Trigger factor, C-terminal domain"/>
    <property type="match status" value="1"/>
</dbReference>
<dbReference type="HAMAP" id="MF_00303">
    <property type="entry name" value="Trigger_factor_Tig"/>
    <property type="match status" value="1"/>
</dbReference>
<dbReference type="InterPro" id="IPR046357">
    <property type="entry name" value="PPIase_dom_sf"/>
</dbReference>
<dbReference type="InterPro" id="IPR001179">
    <property type="entry name" value="PPIase_FKBP_dom"/>
</dbReference>
<dbReference type="InterPro" id="IPR005215">
    <property type="entry name" value="Trig_fac"/>
</dbReference>
<dbReference type="InterPro" id="IPR008880">
    <property type="entry name" value="Trigger_fac_C"/>
</dbReference>
<dbReference type="InterPro" id="IPR037041">
    <property type="entry name" value="Trigger_fac_C_sf"/>
</dbReference>
<dbReference type="InterPro" id="IPR008881">
    <property type="entry name" value="Trigger_fac_ribosome-bd_bac"/>
</dbReference>
<dbReference type="InterPro" id="IPR036611">
    <property type="entry name" value="Trigger_fac_ribosome-bd_sf"/>
</dbReference>
<dbReference type="InterPro" id="IPR027304">
    <property type="entry name" value="Trigger_fact/SurA_dom_sf"/>
</dbReference>
<dbReference type="NCBIfam" id="TIGR00115">
    <property type="entry name" value="tig"/>
    <property type="match status" value="1"/>
</dbReference>
<dbReference type="PANTHER" id="PTHR30560">
    <property type="entry name" value="TRIGGER FACTOR CHAPERONE AND PEPTIDYL-PROLYL CIS/TRANS ISOMERASE"/>
    <property type="match status" value="1"/>
</dbReference>
<dbReference type="PANTHER" id="PTHR30560:SF3">
    <property type="entry name" value="TRIGGER FACTOR-LIKE PROTEIN TIG, CHLOROPLASTIC"/>
    <property type="match status" value="1"/>
</dbReference>
<dbReference type="Pfam" id="PF00254">
    <property type="entry name" value="FKBP_C"/>
    <property type="match status" value="1"/>
</dbReference>
<dbReference type="Pfam" id="PF05698">
    <property type="entry name" value="Trigger_C"/>
    <property type="match status" value="1"/>
</dbReference>
<dbReference type="Pfam" id="PF05697">
    <property type="entry name" value="Trigger_N"/>
    <property type="match status" value="1"/>
</dbReference>
<dbReference type="PIRSF" id="PIRSF003095">
    <property type="entry name" value="Trigger_factor"/>
    <property type="match status" value="1"/>
</dbReference>
<dbReference type="SUPFAM" id="SSF54534">
    <property type="entry name" value="FKBP-like"/>
    <property type="match status" value="1"/>
</dbReference>
<dbReference type="SUPFAM" id="SSF109998">
    <property type="entry name" value="Triger factor/SurA peptide-binding domain-like"/>
    <property type="match status" value="1"/>
</dbReference>
<dbReference type="SUPFAM" id="SSF102735">
    <property type="entry name" value="Trigger factor ribosome-binding domain"/>
    <property type="match status" value="1"/>
</dbReference>
<keyword id="KW-0131">Cell cycle</keyword>
<keyword id="KW-0132">Cell division</keyword>
<keyword id="KW-0143">Chaperone</keyword>
<keyword id="KW-0963">Cytoplasm</keyword>
<keyword id="KW-0413">Isomerase</keyword>
<keyword id="KW-1185">Reference proteome</keyword>
<keyword id="KW-0697">Rotamase</keyword>
<sequence>MKITVEHLPQSTVRLDIAADPEEFDAALERAFRRISQQVQVPGFRPGRAPRALVERRVGRELIVAEAQRELMDRLYREALQQHRLTPVAEPEVEIYQDEPLAFRVEVQVYPQVDLDGYRDIRVEPREVEVTEEEIDQVIEGLRRSRAVWKTPDEPRQPRDGDQVIVDIEAYEGEQPFQEPLRQATFVLGESNLFAEIDQAIRSLRPGESAEFDISFAEEDERVSPELRGKTLHYRVTVHEVKEAELPEVNDEFAQSLGVATLSELRDRVRRDLLREKAQAARAEVLEQAVQRLLEVATVELPPALIERQVAADVERLREQLRQRGSSLEEYLRFQGKTLEEFKEELRPQAEARLRRYLVLEAFAEAEGIAVSEEELVAEIERLALASGSPEQFRAFYSVPSVRSYLADELHERKVSERLLELVTEGRGAVIGEAARVLAGAEPAEGTEPAAEEAVTAPEVVDGETTPASESAESLAVTETGSRADDDQAS</sequence>
<comment type="function">
    <text evidence="1">Involved in protein export. Acts as a chaperone by maintaining the newly synthesized protein in an open conformation. Functions as a peptidyl-prolyl cis-trans isomerase.</text>
</comment>
<comment type="catalytic activity">
    <reaction evidence="1">
        <text>[protein]-peptidylproline (omega=180) = [protein]-peptidylproline (omega=0)</text>
        <dbReference type="Rhea" id="RHEA:16237"/>
        <dbReference type="Rhea" id="RHEA-COMP:10747"/>
        <dbReference type="Rhea" id="RHEA-COMP:10748"/>
        <dbReference type="ChEBI" id="CHEBI:83833"/>
        <dbReference type="ChEBI" id="CHEBI:83834"/>
        <dbReference type="EC" id="5.2.1.8"/>
    </reaction>
</comment>
<comment type="subcellular location">
    <subcellularLocation>
        <location>Cytoplasm</location>
    </subcellularLocation>
    <text evidence="1">About half TF is bound to the ribosome near the polypeptide exit tunnel while the other half is free in the cytoplasm.</text>
</comment>
<comment type="domain">
    <text evidence="1">Consists of 3 domains; the N-terminus binds the ribosome, the middle domain has PPIase activity, while the C-terminus has intrinsic chaperone activity on its own.</text>
</comment>
<comment type="similarity">
    <text evidence="1">Belongs to the FKBP-type PPIase family. Tig subfamily.</text>
</comment>
<name>TIG_THERP</name>
<protein>
    <recommendedName>
        <fullName evidence="1">Trigger factor</fullName>
        <shortName evidence="1">TF</shortName>
        <ecNumber evidence="1">5.2.1.8</ecNumber>
    </recommendedName>
    <alternativeName>
        <fullName evidence="1">PPIase</fullName>
    </alternativeName>
</protein>
<organism>
    <name type="scientific">Thermomicrobium roseum (strain ATCC 27502 / DSM 5159 / P-2)</name>
    <dbReference type="NCBI Taxonomy" id="309801"/>
    <lineage>
        <taxon>Bacteria</taxon>
        <taxon>Pseudomonadati</taxon>
        <taxon>Thermomicrobiota</taxon>
        <taxon>Thermomicrobia</taxon>
        <taxon>Thermomicrobiales</taxon>
        <taxon>Thermomicrobiaceae</taxon>
        <taxon>Thermomicrobium</taxon>
    </lineage>
</organism>
<gene>
    <name evidence="1" type="primary">tig</name>
    <name type="ordered locus">trd_1203</name>
</gene>
<proteinExistence type="inferred from homology"/>